<evidence type="ECO:0000255" key="1"/>
<evidence type="ECO:0000305" key="2"/>
<feature type="chain" id="PRO_0000201478" description="Arsenical pump membrane protein">
    <location>
        <begin position="1"/>
        <end position="430"/>
    </location>
</feature>
<feature type="transmembrane region" description="Helical" evidence="1">
    <location>
        <begin position="4"/>
        <end position="24"/>
    </location>
</feature>
<feature type="transmembrane region" description="Helical" evidence="1">
    <location>
        <begin position="26"/>
        <end position="46"/>
    </location>
</feature>
<feature type="transmembrane region" description="Helical" evidence="1">
    <location>
        <begin position="51"/>
        <end position="71"/>
    </location>
</feature>
<feature type="transmembrane region" description="Helical" evidence="1">
    <location>
        <begin position="100"/>
        <end position="120"/>
    </location>
</feature>
<feature type="transmembrane region" description="Helical" evidence="1">
    <location>
        <begin position="138"/>
        <end position="158"/>
    </location>
</feature>
<feature type="transmembrane region" description="Helical" evidence="1">
    <location>
        <begin position="181"/>
        <end position="201"/>
    </location>
</feature>
<feature type="transmembrane region" description="Helical" evidence="1">
    <location>
        <begin position="223"/>
        <end position="243"/>
    </location>
</feature>
<feature type="transmembrane region" description="Helical" evidence="1">
    <location>
        <begin position="245"/>
        <end position="265"/>
    </location>
</feature>
<feature type="transmembrane region" description="Helical" evidence="1">
    <location>
        <begin position="276"/>
        <end position="296"/>
    </location>
</feature>
<feature type="transmembrane region" description="Helical" evidence="1">
    <location>
        <begin position="317"/>
        <end position="337"/>
    </location>
</feature>
<feature type="transmembrane region" description="Helical" evidence="1">
    <location>
        <begin position="373"/>
        <end position="393"/>
    </location>
</feature>
<feature type="transmembrane region" description="Helical" evidence="1">
    <location>
        <begin position="409"/>
        <end position="429"/>
    </location>
</feature>
<gene>
    <name type="primary">arsB</name>
    <name type="ordered locus">SERP0210</name>
</gene>
<accession>Q5HRI3</accession>
<reference key="1">
    <citation type="journal article" date="2005" name="J. Bacteriol.">
        <title>Insights on evolution of virulence and resistance from the complete genome analysis of an early methicillin-resistant Staphylococcus aureus strain and a biofilm-producing methicillin-resistant Staphylococcus epidermidis strain.</title>
        <authorList>
            <person name="Gill S.R."/>
            <person name="Fouts D.E."/>
            <person name="Archer G.L."/>
            <person name="Mongodin E.F."/>
            <person name="DeBoy R.T."/>
            <person name="Ravel J."/>
            <person name="Paulsen I.T."/>
            <person name="Kolonay J.F."/>
            <person name="Brinkac L.M."/>
            <person name="Beanan M.J."/>
            <person name="Dodson R.J."/>
            <person name="Daugherty S.C."/>
            <person name="Madupu R."/>
            <person name="Angiuoli S.V."/>
            <person name="Durkin A.S."/>
            <person name="Haft D.H."/>
            <person name="Vamathevan J.J."/>
            <person name="Khouri H."/>
            <person name="Utterback T.R."/>
            <person name="Lee C."/>
            <person name="Dimitrov G."/>
            <person name="Jiang L."/>
            <person name="Qin H."/>
            <person name="Weidman J."/>
            <person name="Tran K."/>
            <person name="Kang K.H."/>
            <person name="Hance I.R."/>
            <person name="Nelson K.E."/>
            <person name="Fraser C.M."/>
        </authorList>
    </citation>
    <scope>NUCLEOTIDE SEQUENCE [LARGE SCALE GENOMIC DNA]</scope>
    <source>
        <strain>ATCC 35984 / DSM 28319 / BCRC 17069 / CCUG 31568 / BM 3577 / RP62A</strain>
    </source>
</reference>
<protein>
    <recommendedName>
        <fullName>Arsenical pump membrane protein</fullName>
    </recommendedName>
    <alternativeName>
        <fullName>Arsenic efflux pump protein</fullName>
    </alternativeName>
</protein>
<comment type="function">
    <text>Involved in arsenical resistance. Thought to form the channel of an arsenite pump.</text>
</comment>
<comment type="subcellular location">
    <subcellularLocation>
        <location evidence="2">Cell membrane</location>
        <topology evidence="2">Multi-pass membrane protein</topology>
    </subcellularLocation>
</comment>
<comment type="similarity">
    <text evidence="2">Belongs to the ArsB family.</text>
</comment>
<name>ARSB_STAEQ</name>
<sequence>MTTVLAIVIFFITLTLIIWQPKGLDIGISAIIGALLVIITGVVNFTDILEVIGIVWNATLTFVSVILISLILDEIGFFEWSAIHMVKASNGHGLKMFIYIMILGALIAAFFANDGAALILTPIVLAMIRNLGFNNKLVFPFIIACGFIADSTSLPLVVSNLVNIVSADYFGIKFVEYLMRMFIPNLFSLLASILVLWFYFRKSIPKTFDISSISEPKDAIRDTRLFKISWIILALLLIGYLVSEFIHIPVSFITGAIAVIFILLARQSNVVHTKQVIKGAPWNIVIFSIGMYLVIFGLKNVGMTLILADILSSIAQHGLFSSIMGMGFVSAFLSAIMNNMPTVLIDAIAIDQSHAISSIKEGMIYANVIGADLGPKITPIGSLATLLWLHVLVQKGVKISWGTYFKTGIVITIPVLFFTLLGLYLTLIIF</sequence>
<keyword id="KW-0059">Arsenical resistance</keyword>
<keyword id="KW-1003">Cell membrane</keyword>
<keyword id="KW-0472">Membrane</keyword>
<keyword id="KW-1185">Reference proteome</keyword>
<keyword id="KW-0812">Transmembrane</keyword>
<keyword id="KW-1133">Transmembrane helix</keyword>
<keyword id="KW-0813">Transport</keyword>
<organism>
    <name type="scientific">Staphylococcus epidermidis (strain ATCC 35984 / DSM 28319 / BCRC 17069 / CCUG 31568 / BM 3577 / RP62A)</name>
    <dbReference type="NCBI Taxonomy" id="176279"/>
    <lineage>
        <taxon>Bacteria</taxon>
        <taxon>Bacillati</taxon>
        <taxon>Bacillota</taxon>
        <taxon>Bacilli</taxon>
        <taxon>Bacillales</taxon>
        <taxon>Staphylococcaceae</taxon>
        <taxon>Staphylococcus</taxon>
    </lineage>
</organism>
<proteinExistence type="inferred from homology"/>
<dbReference type="EMBL" id="CP000029">
    <property type="protein sequence ID" value="AAW53574.1"/>
    <property type="molecule type" value="Genomic_DNA"/>
</dbReference>
<dbReference type="RefSeq" id="WP_002445751.1">
    <property type="nucleotide sequence ID" value="NC_002976.3"/>
</dbReference>
<dbReference type="SMR" id="Q5HRI3"/>
<dbReference type="STRING" id="176279.SERP0210"/>
<dbReference type="KEGG" id="ser:SERP0210"/>
<dbReference type="eggNOG" id="COG1055">
    <property type="taxonomic scope" value="Bacteria"/>
</dbReference>
<dbReference type="HOGENOM" id="CLU_043931_1_0_9"/>
<dbReference type="Proteomes" id="UP000000531">
    <property type="component" value="Chromosome"/>
</dbReference>
<dbReference type="GO" id="GO:0005886">
    <property type="term" value="C:plasma membrane"/>
    <property type="evidence" value="ECO:0007669"/>
    <property type="project" value="UniProtKB-SubCell"/>
</dbReference>
<dbReference type="GO" id="GO:0015105">
    <property type="term" value="F:arsenite transmembrane transporter activity"/>
    <property type="evidence" value="ECO:0007669"/>
    <property type="project" value="InterPro"/>
</dbReference>
<dbReference type="GO" id="GO:0046685">
    <property type="term" value="P:response to arsenic-containing substance"/>
    <property type="evidence" value="ECO:0007669"/>
    <property type="project" value="UniProtKB-KW"/>
</dbReference>
<dbReference type="CDD" id="cd01118">
    <property type="entry name" value="ArsB_permease"/>
    <property type="match status" value="1"/>
</dbReference>
<dbReference type="InterPro" id="IPR000802">
    <property type="entry name" value="Arsenical_pump_ArsB"/>
</dbReference>
<dbReference type="NCBIfam" id="TIGR00935">
    <property type="entry name" value="2a45"/>
    <property type="match status" value="1"/>
</dbReference>
<dbReference type="NCBIfam" id="NF033877">
    <property type="entry name" value="arsB_Sta_pI258"/>
    <property type="match status" value="1"/>
</dbReference>
<dbReference type="NCBIfam" id="NF011980">
    <property type="entry name" value="PRK15445.1"/>
    <property type="match status" value="1"/>
</dbReference>
<dbReference type="PANTHER" id="PTHR43302">
    <property type="entry name" value="TRANSPORTER ARSB-RELATED"/>
    <property type="match status" value="1"/>
</dbReference>
<dbReference type="PANTHER" id="PTHR43302:SF5">
    <property type="entry name" value="TRANSPORTER ARSB-RELATED"/>
    <property type="match status" value="1"/>
</dbReference>
<dbReference type="Pfam" id="PF02040">
    <property type="entry name" value="ArsB"/>
    <property type="match status" value="1"/>
</dbReference>
<dbReference type="PRINTS" id="PR00758">
    <property type="entry name" value="ARSENICPUMP"/>
</dbReference>